<keyword id="KW-1185">Reference proteome</keyword>
<keyword id="KW-0687">Ribonucleoprotein</keyword>
<keyword id="KW-0689">Ribosomal protein</keyword>
<keyword id="KW-0694">RNA-binding</keyword>
<keyword id="KW-0699">rRNA-binding</keyword>
<sequence>MAKQSMKARDVKRVKLAEKFYAKRVELKKIISDVNASDEDRWDAVLKLQTLPRDSSPSRQRNRCRQTGRPHGVLRKFGLSRIKVREAAMRGEIPGLKKASW</sequence>
<organism>
    <name type="scientific">Haemophilus influenzae (strain ATCC 51907 / DSM 11121 / KW20 / Rd)</name>
    <dbReference type="NCBI Taxonomy" id="71421"/>
    <lineage>
        <taxon>Bacteria</taxon>
        <taxon>Pseudomonadati</taxon>
        <taxon>Pseudomonadota</taxon>
        <taxon>Gammaproteobacteria</taxon>
        <taxon>Pasteurellales</taxon>
        <taxon>Pasteurellaceae</taxon>
        <taxon>Haemophilus</taxon>
    </lineage>
</organism>
<reference key="1">
    <citation type="journal article" date="1995" name="Science">
        <title>Whole-genome random sequencing and assembly of Haemophilus influenzae Rd.</title>
        <authorList>
            <person name="Fleischmann R.D."/>
            <person name="Adams M.D."/>
            <person name="White O."/>
            <person name="Clayton R.A."/>
            <person name="Kirkness E.F."/>
            <person name="Kerlavage A.R."/>
            <person name="Bult C.J."/>
            <person name="Tomb J.-F."/>
            <person name="Dougherty B.A."/>
            <person name="Merrick J.M."/>
            <person name="McKenney K."/>
            <person name="Sutton G.G."/>
            <person name="FitzHugh W."/>
            <person name="Fields C.A."/>
            <person name="Gocayne J.D."/>
            <person name="Scott J.D."/>
            <person name="Shirley R."/>
            <person name="Liu L.-I."/>
            <person name="Glodek A."/>
            <person name="Kelley J.M."/>
            <person name="Weidman J.F."/>
            <person name="Phillips C.A."/>
            <person name="Spriggs T."/>
            <person name="Hedblom E."/>
            <person name="Cotton M.D."/>
            <person name="Utterback T.R."/>
            <person name="Hanna M.C."/>
            <person name="Nguyen D.T."/>
            <person name="Saudek D.M."/>
            <person name="Brandon R.C."/>
            <person name="Fine L.D."/>
            <person name="Fritchman J.L."/>
            <person name="Fuhrmann J.L."/>
            <person name="Geoghagen N.S.M."/>
            <person name="Gnehm C.L."/>
            <person name="McDonald L.A."/>
            <person name="Small K.V."/>
            <person name="Fraser C.M."/>
            <person name="Smith H.O."/>
            <person name="Venter J.C."/>
        </authorList>
    </citation>
    <scope>NUCLEOTIDE SEQUENCE [LARGE SCALE GENOMIC DNA]</scope>
    <source>
        <strain>ATCC 51907 / DSM 11121 / KW20 / Rd</strain>
    </source>
</reference>
<evidence type="ECO:0000250" key="1"/>
<evidence type="ECO:0000255" key="2">
    <source>
        <dbReference type="HAMAP-Rule" id="MF_00537"/>
    </source>
</evidence>
<evidence type="ECO:0000305" key="3"/>
<protein>
    <recommendedName>
        <fullName evidence="2">Small ribosomal subunit protein uS14</fullName>
    </recommendedName>
    <alternativeName>
        <fullName evidence="3">30S ribosomal protein S14</fullName>
    </alternativeName>
</protein>
<name>RS14_HAEIN</name>
<proteinExistence type="inferred from homology"/>
<accession>P44381</accession>
<feature type="initiator methionine" description="Removed" evidence="1">
    <location>
        <position position="1"/>
    </location>
</feature>
<feature type="chain" id="PRO_0000130893" description="Small ribosomal subunit protein uS14">
    <location>
        <begin position="2"/>
        <end position="101"/>
    </location>
</feature>
<gene>
    <name evidence="2" type="primary">rpsN</name>
    <name evidence="2" type="synonym">rps14</name>
    <name type="ordered locus">HI_0791</name>
</gene>
<comment type="function">
    <text evidence="2">Binds 16S rRNA, required for the assembly of 30S particles and may also be responsible for determining the conformation of the 16S rRNA at the A site.</text>
</comment>
<comment type="subunit">
    <text evidence="2">Part of the 30S ribosomal subunit. Contacts proteins S3 and S10.</text>
</comment>
<comment type="similarity">
    <text evidence="2">Belongs to the universal ribosomal protein uS14 family.</text>
</comment>
<dbReference type="EMBL" id="L42023">
    <property type="protein sequence ID" value="AAC22449.1"/>
    <property type="molecule type" value="Genomic_DNA"/>
</dbReference>
<dbReference type="PIR" id="I64093">
    <property type="entry name" value="I64093"/>
</dbReference>
<dbReference type="RefSeq" id="NP_438950.1">
    <property type="nucleotide sequence ID" value="NC_000907.1"/>
</dbReference>
<dbReference type="SMR" id="P44381"/>
<dbReference type="STRING" id="71421.HI_0791"/>
<dbReference type="EnsemblBacteria" id="AAC22449">
    <property type="protein sequence ID" value="AAC22449"/>
    <property type="gene ID" value="HI_0791"/>
</dbReference>
<dbReference type="KEGG" id="hin:HI_0791"/>
<dbReference type="PATRIC" id="fig|71421.8.peg.830"/>
<dbReference type="eggNOG" id="COG0199">
    <property type="taxonomic scope" value="Bacteria"/>
</dbReference>
<dbReference type="HOGENOM" id="CLU_139869_0_1_6"/>
<dbReference type="OrthoDB" id="9810484at2"/>
<dbReference type="PhylomeDB" id="P44381"/>
<dbReference type="BioCyc" id="HINF71421:G1GJ1-831-MONOMER"/>
<dbReference type="Proteomes" id="UP000000579">
    <property type="component" value="Chromosome"/>
</dbReference>
<dbReference type="GO" id="GO:0005737">
    <property type="term" value="C:cytoplasm"/>
    <property type="evidence" value="ECO:0007669"/>
    <property type="project" value="UniProtKB-ARBA"/>
</dbReference>
<dbReference type="GO" id="GO:0015935">
    <property type="term" value="C:small ribosomal subunit"/>
    <property type="evidence" value="ECO:0000318"/>
    <property type="project" value="GO_Central"/>
</dbReference>
<dbReference type="GO" id="GO:0019843">
    <property type="term" value="F:rRNA binding"/>
    <property type="evidence" value="ECO:0007669"/>
    <property type="project" value="UniProtKB-UniRule"/>
</dbReference>
<dbReference type="GO" id="GO:0003735">
    <property type="term" value="F:structural constituent of ribosome"/>
    <property type="evidence" value="ECO:0000318"/>
    <property type="project" value="GO_Central"/>
</dbReference>
<dbReference type="GO" id="GO:0006412">
    <property type="term" value="P:translation"/>
    <property type="evidence" value="ECO:0000318"/>
    <property type="project" value="GO_Central"/>
</dbReference>
<dbReference type="FunFam" id="1.10.287.1480:FF:000001">
    <property type="entry name" value="30S ribosomal protein S14"/>
    <property type="match status" value="1"/>
</dbReference>
<dbReference type="Gene3D" id="1.10.287.1480">
    <property type="match status" value="1"/>
</dbReference>
<dbReference type="HAMAP" id="MF_00537">
    <property type="entry name" value="Ribosomal_uS14_1"/>
    <property type="match status" value="1"/>
</dbReference>
<dbReference type="InterPro" id="IPR001209">
    <property type="entry name" value="Ribosomal_uS14"/>
</dbReference>
<dbReference type="InterPro" id="IPR023036">
    <property type="entry name" value="Ribosomal_uS14_bac/plastid"/>
</dbReference>
<dbReference type="InterPro" id="IPR018271">
    <property type="entry name" value="Ribosomal_uS14_CS"/>
</dbReference>
<dbReference type="NCBIfam" id="NF006477">
    <property type="entry name" value="PRK08881.1"/>
    <property type="match status" value="1"/>
</dbReference>
<dbReference type="PANTHER" id="PTHR19836">
    <property type="entry name" value="30S RIBOSOMAL PROTEIN S14"/>
    <property type="match status" value="1"/>
</dbReference>
<dbReference type="PANTHER" id="PTHR19836:SF19">
    <property type="entry name" value="SMALL RIBOSOMAL SUBUNIT PROTEIN US14M"/>
    <property type="match status" value="1"/>
</dbReference>
<dbReference type="Pfam" id="PF00253">
    <property type="entry name" value="Ribosomal_S14"/>
    <property type="match status" value="1"/>
</dbReference>
<dbReference type="SUPFAM" id="SSF57716">
    <property type="entry name" value="Glucocorticoid receptor-like (DNA-binding domain)"/>
    <property type="match status" value="1"/>
</dbReference>
<dbReference type="PROSITE" id="PS00527">
    <property type="entry name" value="RIBOSOMAL_S14"/>
    <property type="match status" value="1"/>
</dbReference>